<organism>
    <name type="scientific">Methylorubrum extorquens (strain CM4 / NCIMB 13688)</name>
    <name type="common">Methylobacterium extorquens</name>
    <dbReference type="NCBI Taxonomy" id="440085"/>
    <lineage>
        <taxon>Bacteria</taxon>
        <taxon>Pseudomonadati</taxon>
        <taxon>Pseudomonadota</taxon>
        <taxon>Alphaproteobacteria</taxon>
        <taxon>Hyphomicrobiales</taxon>
        <taxon>Methylobacteriaceae</taxon>
        <taxon>Methylorubrum</taxon>
    </lineage>
</organism>
<comment type="function">
    <text evidence="1">Binds directly to 23S rRNA. The L1 stalk is quite mobile in the ribosome, and is involved in E site tRNA release.</text>
</comment>
<comment type="function">
    <text evidence="1">Protein L1 is also a translational repressor protein, it controls the translation of the L11 operon by binding to its mRNA.</text>
</comment>
<comment type="subunit">
    <text evidence="1">Part of the 50S ribosomal subunit.</text>
</comment>
<comment type="similarity">
    <text evidence="1">Belongs to the universal ribosomal protein uL1 family.</text>
</comment>
<proteinExistence type="inferred from homology"/>
<reference key="1">
    <citation type="submission" date="2008-12" db="EMBL/GenBank/DDBJ databases">
        <title>Complete sequence of chromosome of Methylobacterium chloromethanicum CM4.</title>
        <authorList>
            <consortium name="US DOE Joint Genome Institute"/>
            <person name="Lucas S."/>
            <person name="Copeland A."/>
            <person name="Lapidus A."/>
            <person name="Glavina del Rio T."/>
            <person name="Dalin E."/>
            <person name="Tice H."/>
            <person name="Bruce D."/>
            <person name="Goodwin L."/>
            <person name="Pitluck S."/>
            <person name="Chertkov O."/>
            <person name="Brettin T."/>
            <person name="Detter J.C."/>
            <person name="Han C."/>
            <person name="Larimer F."/>
            <person name="Land M."/>
            <person name="Hauser L."/>
            <person name="Kyrpides N."/>
            <person name="Mikhailova N."/>
            <person name="Marx C."/>
            <person name="Richardson P."/>
        </authorList>
    </citation>
    <scope>NUCLEOTIDE SEQUENCE [LARGE SCALE GENOMIC DNA]</scope>
    <source>
        <strain>CM4 / NCIMB 13688</strain>
    </source>
</reference>
<dbReference type="EMBL" id="CP001298">
    <property type="protein sequence ID" value="ACK85144.1"/>
    <property type="molecule type" value="Genomic_DNA"/>
</dbReference>
<dbReference type="RefSeq" id="WP_003597509.1">
    <property type="nucleotide sequence ID" value="NC_011757.1"/>
</dbReference>
<dbReference type="SMR" id="B7KN27"/>
<dbReference type="GeneID" id="72991717"/>
<dbReference type="KEGG" id="mch:Mchl_4368"/>
<dbReference type="HOGENOM" id="CLU_062853_0_0_5"/>
<dbReference type="Proteomes" id="UP000002385">
    <property type="component" value="Chromosome"/>
</dbReference>
<dbReference type="GO" id="GO:0022625">
    <property type="term" value="C:cytosolic large ribosomal subunit"/>
    <property type="evidence" value="ECO:0007669"/>
    <property type="project" value="TreeGrafter"/>
</dbReference>
<dbReference type="GO" id="GO:0019843">
    <property type="term" value="F:rRNA binding"/>
    <property type="evidence" value="ECO:0007669"/>
    <property type="project" value="UniProtKB-UniRule"/>
</dbReference>
<dbReference type="GO" id="GO:0003735">
    <property type="term" value="F:structural constituent of ribosome"/>
    <property type="evidence" value="ECO:0007669"/>
    <property type="project" value="InterPro"/>
</dbReference>
<dbReference type="GO" id="GO:0000049">
    <property type="term" value="F:tRNA binding"/>
    <property type="evidence" value="ECO:0007669"/>
    <property type="project" value="UniProtKB-KW"/>
</dbReference>
<dbReference type="GO" id="GO:0006417">
    <property type="term" value="P:regulation of translation"/>
    <property type="evidence" value="ECO:0007669"/>
    <property type="project" value="UniProtKB-KW"/>
</dbReference>
<dbReference type="GO" id="GO:0006412">
    <property type="term" value="P:translation"/>
    <property type="evidence" value="ECO:0007669"/>
    <property type="project" value="UniProtKB-UniRule"/>
</dbReference>
<dbReference type="CDD" id="cd00403">
    <property type="entry name" value="Ribosomal_L1"/>
    <property type="match status" value="1"/>
</dbReference>
<dbReference type="FunFam" id="3.40.50.790:FF:000001">
    <property type="entry name" value="50S ribosomal protein L1"/>
    <property type="match status" value="1"/>
</dbReference>
<dbReference type="Gene3D" id="3.30.190.20">
    <property type="match status" value="1"/>
</dbReference>
<dbReference type="Gene3D" id="3.40.50.790">
    <property type="match status" value="1"/>
</dbReference>
<dbReference type="HAMAP" id="MF_01318_B">
    <property type="entry name" value="Ribosomal_uL1_B"/>
    <property type="match status" value="1"/>
</dbReference>
<dbReference type="InterPro" id="IPR005878">
    <property type="entry name" value="Ribosom_uL1_bac-type"/>
</dbReference>
<dbReference type="InterPro" id="IPR002143">
    <property type="entry name" value="Ribosomal_uL1"/>
</dbReference>
<dbReference type="InterPro" id="IPR023674">
    <property type="entry name" value="Ribosomal_uL1-like"/>
</dbReference>
<dbReference type="InterPro" id="IPR028364">
    <property type="entry name" value="Ribosomal_uL1/biogenesis"/>
</dbReference>
<dbReference type="InterPro" id="IPR016095">
    <property type="entry name" value="Ribosomal_uL1_3-a/b-sand"/>
</dbReference>
<dbReference type="InterPro" id="IPR023673">
    <property type="entry name" value="Ribosomal_uL1_CS"/>
</dbReference>
<dbReference type="NCBIfam" id="TIGR01169">
    <property type="entry name" value="rplA_bact"/>
    <property type="match status" value="1"/>
</dbReference>
<dbReference type="PANTHER" id="PTHR36427">
    <property type="entry name" value="54S RIBOSOMAL PROTEIN L1, MITOCHONDRIAL"/>
    <property type="match status" value="1"/>
</dbReference>
<dbReference type="PANTHER" id="PTHR36427:SF3">
    <property type="entry name" value="LARGE RIBOSOMAL SUBUNIT PROTEIN UL1M"/>
    <property type="match status" value="1"/>
</dbReference>
<dbReference type="Pfam" id="PF00687">
    <property type="entry name" value="Ribosomal_L1"/>
    <property type="match status" value="1"/>
</dbReference>
<dbReference type="PIRSF" id="PIRSF002155">
    <property type="entry name" value="Ribosomal_L1"/>
    <property type="match status" value="1"/>
</dbReference>
<dbReference type="SUPFAM" id="SSF56808">
    <property type="entry name" value="Ribosomal protein L1"/>
    <property type="match status" value="1"/>
</dbReference>
<dbReference type="PROSITE" id="PS01199">
    <property type="entry name" value="RIBOSOMAL_L1"/>
    <property type="match status" value="1"/>
</dbReference>
<gene>
    <name evidence="1" type="primary">rplA</name>
    <name type="ordered locus">Mchl_4368</name>
</gene>
<protein>
    <recommendedName>
        <fullName evidence="1">Large ribosomal subunit protein uL1</fullName>
    </recommendedName>
    <alternativeName>
        <fullName evidence="2">50S ribosomal protein L1</fullName>
    </alternativeName>
</protein>
<name>RL1_METC4</name>
<accession>B7KN27</accession>
<keyword id="KW-0678">Repressor</keyword>
<keyword id="KW-0687">Ribonucleoprotein</keyword>
<keyword id="KW-0689">Ribosomal protein</keyword>
<keyword id="KW-0694">RNA-binding</keyword>
<keyword id="KW-0699">rRNA-binding</keyword>
<keyword id="KW-0810">Translation regulation</keyword>
<keyword id="KW-0820">tRNA-binding</keyword>
<sequence length="232" mass="24302">MAREGKRIRAAREGLEPMKLYAIDEAIKLVKSKASAKFDETVEISMNLGVDPRHADQMVRGVCNLPNGSGRTVRVAVFARGAKADDARAAGADIVGAEDLLEIVQGGKIEFDRCIATPDLMPLVGRLGKVLGPRGLMPNPKVGTVTMDVKGAVAAAKGGAVEFRVEKAGIIHAGVGKVSFDEQKLVENIKAFADAVAKAKPTGAKGTYIQRIAVTSTMGPGVKVEPSTVLTA</sequence>
<evidence type="ECO:0000255" key="1">
    <source>
        <dbReference type="HAMAP-Rule" id="MF_01318"/>
    </source>
</evidence>
<evidence type="ECO:0000305" key="2"/>
<feature type="chain" id="PRO_1000165688" description="Large ribosomal subunit protein uL1">
    <location>
        <begin position="1"/>
        <end position="232"/>
    </location>
</feature>